<gene>
    <name type="primary">Cyp6v1</name>
    <name type="ORF">CG1829</name>
</gene>
<sequence length="520" mass="60763">MVYSTNILLAIVTILTGVFIWSRRTYVYWQRRRVKFVQPTHLLGNLSRVLRLEESFALQLRRFYFDERFRNEPVVGIYLFHQPALLIRDLQLVRTVLVEDFVSFSNRFAKCDGRSDKMGALSLFLAKQPEWREIRTRLAPAFAGAKLKQMFSLMEEIGCDLEWYLKRLTRDLRRGDAERGAIVSIKDVCDLYNTDMIASIAFGLRSYSLRNTQSEIGSHCQDLFRPNVRRIIDLFVIFYLPKLVPLLRPKLFTEPHAEFLRRVIQLVIEERERGGDLRNDLIEMLLTLKKEADLQQDKSHFTHHRDFLAAQAASFEVAGIETCSASMSFALYELAKQPLMQSRLRREIREAFASNPNGRLTYEAVARMEFLDMVVEETLRKYPIVPLLERECTPINKKRFYSLRPHAECYTRRGMPVFISNLAIHHDPKYWPDPDRFDPERFSAANKALQAPMSYMPFGAGPRNCIGMQIGLLQIKLGLVYFLHQHRVEICDRTVERIQFDAKFALLASEQRIYLKVDCL</sequence>
<protein>
    <recommendedName>
        <fullName>Probable cytochrome P450 6v1</fullName>
        <ecNumber>1.14.-.-</ecNumber>
    </recommendedName>
    <alternativeName>
        <fullName>CYPVIV1</fullName>
    </alternativeName>
</protein>
<dbReference type="EC" id="1.14.-.-"/>
<dbReference type="EMBL" id="AE014298">
    <property type="protein sequence ID" value="AAF50889.1"/>
    <property type="molecule type" value="Genomic_DNA"/>
</dbReference>
<dbReference type="EMBL" id="BT031316">
    <property type="protein sequence ID" value="ABY21729.1"/>
    <property type="molecule type" value="mRNA"/>
</dbReference>
<dbReference type="RefSeq" id="NP_001285499.1">
    <property type="nucleotide sequence ID" value="NM_001298570.1"/>
</dbReference>
<dbReference type="RefSeq" id="NP_001285500.1">
    <property type="nucleotide sequence ID" value="NM_001298571.1"/>
</dbReference>
<dbReference type="RefSeq" id="NP_608403.1">
    <property type="nucleotide sequence ID" value="NM_134559.3"/>
</dbReference>
<dbReference type="SMR" id="Q9VRB3"/>
<dbReference type="BioGRID" id="59344">
    <property type="interactions" value="6"/>
</dbReference>
<dbReference type="DIP" id="DIP-19087N"/>
<dbReference type="FunCoup" id="Q9VRB3">
    <property type="interactions" value="54"/>
</dbReference>
<dbReference type="IntAct" id="Q9VRB3">
    <property type="interactions" value="2"/>
</dbReference>
<dbReference type="STRING" id="7227.FBpp0076968"/>
<dbReference type="PaxDb" id="7227-FBpp0076968"/>
<dbReference type="DNASU" id="33056"/>
<dbReference type="EnsemblMetazoa" id="FBtr0077276">
    <property type="protein sequence ID" value="FBpp0076968"/>
    <property type="gene ID" value="FBgn0031126"/>
</dbReference>
<dbReference type="EnsemblMetazoa" id="FBtr0344467">
    <property type="protein sequence ID" value="FBpp0310838"/>
    <property type="gene ID" value="FBgn0031126"/>
</dbReference>
<dbReference type="EnsemblMetazoa" id="FBtr0345967">
    <property type="protein sequence ID" value="FBpp0311867"/>
    <property type="gene ID" value="FBgn0031126"/>
</dbReference>
<dbReference type="GeneID" id="33056"/>
<dbReference type="KEGG" id="dme:Dmel_CG1829"/>
<dbReference type="UCSC" id="CG1829-RA">
    <property type="organism name" value="d. melanogaster"/>
</dbReference>
<dbReference type="AGR" id="FB:FBgn0031126"/>
<dbReference type="CTD" id="33056"/>
<dbReference type="FlyBase" id="FBgn0031126">
    <property type="gene designation" value="Cyp6v1"/>
</dbReference>
<dbReference type="VEuPathDB" id="VectorBase:FBgn0031126"/>
<dbReference type="eggNOG" id="KOG0158">
    <property type="taxonomic scope" value="Eukaryota"/>
</dbReference>
<dbReference type="HOGENOM" id="CLU_001570_5_2_1"/>
<dbReference type="InParanoid" id="Q9VRB3"/>
<dbReference type="OMA" id="HNCIGMQ"/>
<dbReference type="OrthoDB" id="2789670at2759"/>
<dbReference type="PhylomeDB" id="Q9VRB3"/>
<dbReference type="SignaLink" id="Q9VRB3"/>
<dbReference type="BioGRID-ORCS" id="33056">
    <property type="hits" value="0 hits in 1 CRISPR screen"/>
</dbReference>
<dbReference type="GenomeRNAi" id="33056"/>
<dbReference type="PRO" id="PR:Q9VRB3"/>
<dbReference type="Proteomes" id="UP000000803">
    <property type="component" value="Chromosome X"/>
</dbReference>
<dbReference type="Bgee" id="FBgn0031126">
    <property type="expression patterns" value="Expressed in fat body cell in open tracheal system trachea and 179 other cell types or tissues"/>
</dbReference>
<dbReference type="ExpressionAtlas" id="Q9VRB3">
    <property type="expression patterns" value="baseline and differential"/>
</dbReference>
<dbReference type="GO" id="GO:0005789">
    <property type="term" value="C:endoplasmic reticulum membrane"/>
    <property type="evidence" value="ECO:0007669"/>
    <property type="project" value="UniProtKB-SubCell"/>
</dbReference>
<dbReference type="GO" id="GO:0020037">
    <property type="term" value="F:heme binding"/>
    <property type="evidence" value="ECO:0007669"/>
    <property type="project" value="InterPro"/>
</dbReference>
<dbReference type="GO" id="GO:0005506">
    <property type="term" value="F:iron ion binding"/>
    <property type="evidence" value="ECO:0007669"/>
    <property type="project" value="InterPro"/>
</dbReference>
<dbReference type="GO" id="GO:0004497">
    <property type="term" value="F:monooxygenase activity"/>
    <property type="evidence" value="ECO:0007669"/>
    <property type="project" value="UniProtKB-KW"/>
</dbReference>
<dbReference type="GO" id="GO:0016705">
    <property type="term" value="F:oxidoreductase activity, acting on paired donors, with incorporation or reduction of molecular oxygen"/>
    <property type="evidence" value="ECO:0007669"/>
    <property type="project" value="InterPro"/>
</dbReference>
<dbReference type="GO" id="GO:0046701">
    <property type="term" value="P:insecticide catabolic process"/>
    <property type="evidence" value="ECO:0000318"/>
    <property type="project" value="GO_Central"/>
</dbReference>
<dbReference type="GO" id="GO:0046680">
    <property type="term" value="P:response to DDT"/>
    <property type="evidence" value="ECO:0000318"/>
    <property type="project" value="GO_Central"/>
</dbReference>
<dbReference type="CDD" id="cd11056">
    <property type="entry name" value="CYP6-like"/>
    <property type="match status" value="1"/>
</dbReference>
<dbReference type="FunFam" id="1.10.630.10:FF:000042">
    <property type="entry name" value="Cytochrome P450"/>
    <property type="match status" value="1"/>
</dbReference>
<dbReference type="Gene3D" id="1.10.630.10">
    <property type="entry name" value="Cytochrome P450"/>
    <property type="match status" value="1"/>
</dbReference>
<dbReference type="InterPro" id="IPR001128">
    <property type="entry name" value="Cyt_P450"/>
</dbReference>
<dbReference type="InterPro" id="IPR017972">
    <property type="entry name" value="Cyt_P450_CS"/>
</dbReference>
<dbReference type="InterPro" id="IPR002401">
    <property type="entry name" value="Cyt_P450_E_grp-I"/>
</dbReference>
<dbReference type="InterPro" id="IPR036396">
    <property type="entry name" value="Cyt_P450_sf"/>
</dbReference>
<dbReference type="InterPro" id="IPR050476">
    <property type="entry name" value="Insect_CytP450_Detox"/>
</dbReference>
<dbReference type="PANTHER" id="PTHR24292">
    <property type="entry name" value="CYTOCHROME P450"/>
    <property type="match status" value="1"/>
</dbReference>
<dbReference type="PANTHER" id="PTHR24292:SF45">
    <property type="entry name" value="CYTOCHROME P450 6G1-RELATED"/>
    <property type="match status" value="1"/>
</dbReference>
<dbReference type="Pfam" id="PF00067">
    <property type="entry name" value="p450"/>
    <property type="match status" value="1"/>
</dbReference>
<dbReference type="PRINTS" id="PR00463">
    <property type="entry name" value="EP450I"/>
</dbReference>
<dbReference type="PRINTS" id="PR00385">
    <property type="entry name" value="P450"/>
</dbReference>
<dbReference type="SUPFAM" id="SSF48264">
    <property type="entry name" value="Cytochrome P450"/>
    <property type="match status" value="1"/>
</dbReference>
<dbReference type="PROSITE" id="PS00086">
    <property type="entry name" value="CYTOCHROME_P450"/>
    <property type="match status" value="1"/>
</dbReference>
<organism>
    <name type="scientific">Drosophila melanogaster</name>
    <name type="common">Fruit fly</name>
    <dbReference type="NCBI Taxonomy" id="7227"/>
    <lineage>
        <taxon>Eukaryota</taxon>
        <taxon>Metazoa</taxon>
        <taxon>Ecdysozoa</taxon>
        <taxon>Arthropoda</taxon>
        <taxon>Hexapoda</taxon>
        <taxon>Insecta</taxon>
        <taxon>Pterygota</taxon>
        <taxon>Neoptera</taxon>
        <taxon>Endopterygota</taxon>
        <taxon>Diptera</taxon>
        <taxon>Brachycera</taxon>
        <taxon>Muscomorpha</taxon>
        <taxon>Ephydroidea</taxon>
        <taxon>Drosophilidae</taxon>
        <taxon>Drosophila</taxon>
        <taxon>Sophophora</taxon>
    </lineage>
</organism>
<accession>Q9VRB3</accession>
<accession>A9UNF2</accession>
<evidence type="ECO:0000250" key="1"/>
<evidence type="ECO:0000305" key="2"/>
<reference key="1">
    <citation type="journal article" date="2000" name="Science">
        <title>The genome sequence of Drosophila melanogaster.</title>
        <authorList>
            <person name="Adams M.D."/>
            <person name="Celniker S.E."/>
            <person name="Holt R.A."/>
            <person name="Evans C.A."/>
            <person name="Gocayne J.D."/>
            <person name="Amanatides P.G."/>
            <person name="Scherer S.E."/>
            <person name="Li P.W."/>
            <person name="Hoskins R.A."/>
            <person name="Galle R.F."/>
            <person name="George R.A."/>
            <person name="Lewis S.E."/>
            <person name="Richards S."/>
            <person name="Ashburner M."/>
            <person name="Henderson S.N."/>
            <person name="Sutton G.G."/>
            <person name="Wortman J.R."/>
            <person name="Yandell M.D."/>
            <person name="Zhang Q."/>
            <person name="Chen L.X."/>
            <person name="Brandon R.C."/>
            <person name="Rogers Y.-H.C."/>
            <person name="Blazej R.G."/>
            <person name="Champe M."/>
            <person name="Pfeiffer B.D."/>
            <person name="Wan K.H."/>
            <person name="Doyle C."/>
            <person name="Baxter E.G."/>
            <person name="Helt G."/>
            <person name="Nelson C.R."/>
            <person name="Miklos G.L.G."/>
            <person name="Abril J.F."/>
            <person name="Agbayani A."/>
            <person name="An H.-J."/>
            <person name="Andrews-Pfannkoch C."/>
            <person name="Baldwin D."/>
            <person name="Ballew R.M."/>
            <person name="Basu A."/>
            <person name="Baxendale J."/>
            <person name="Bayraktaroglu L."/>
            <person name="Beasley E.M."/>
            <person name="Beeson K.Y."/>
            <person name="Benos P.V."/>
            <person name="Berman B.P."/>
            <person name="Bhandari D."/>
            <person name="Bolshakov S."/>
            <person name="Borkova D."/>
            <person name="Botchan M.R."/>
            <person name="Bouck J."/>
            <person name="Brokstein P."/>
            <person name="Brottier P."/>
            <person name="Burtis K.C."/>
            <person name="Busam D.A."/>
            <person name="Butler H."/>
            <person name="Cadieu E."/>
            <person name="Center A."/>
            <person name="Chandra I."/>
            <person name="Cherry J.M."/>
            <person name="Cawley S."/>
            <person name="Dahlke C."/>
            <person name="Davenport L.B."/>
            <person name="Davies P."/>
            <person name="de Pablos B."/>
            <person name="Delcher A."/>
            <person name="Deng Z."/>
            <person name="Mays A.D."/>
            <person name="Dew I."/>
            <person name="Dietz S.M."/>
            <person name="Dodson K."/>
            <person name="Doup L.E."/>
            <person name="Downes M."/>
            <person name="Dugan-Rocha S."/>
            <person name="Dunkov B.C."/>
            <person name="Dunn P."/>
            <person name="Durbin K.J."/>
            <person name="Evangelista C.C."/>
            <person name="Ferraz C."/>
            <person name="Ferriera S."/>
            <person name="Fleischmann W."/>
            <person name="Fosler C."/>
            <person name="Gabrielian A.E."/>
            <person name="Garg N.S."/>
            <person name="Gelbart W.M."/>
            <person name="Glasser K."/>
            <person name="Glodek A."/>
            <person name="Gong F."/>
            <person name="Gorrell J.H."/>
            <person name="Gu Z."/>
            <person name="Guan P."/>
            <person name="Harris M."/>
            <person name="Harris N.L."/>
            <person name="Harvey D.A."/>
            <person name="Heiman T.J."/>
            <person name="Hernandez J.R."/>
            <person name="Houck J."/>
            <person name="Hostin D."/>
            <person name="Houston K.A."/>
            <person name="Howland T.J."/>
            <person name="Wei M.-H."/>
            <person name="Ibegwam C."/>
            <person name="Jalali M."/>
            <person name="Kalush F."/>
            <person name="Karpen G.H."/>
            <person name="Ke Z."/>
            <person name="Kennison J.A."/>
            <person name="Ketchum K.A."/>
            <person name="Kimmel B.E."/>
            <person name="Kodira C.D."/>
            <person name="Kraft C.L."/>
            <person name="Kravitz S."/>
            <person name="Kulp D."/>
            <person name="Lai Z."/>
            <person name="Lasko P."/>
            <person name="Lei Y."/>
            <person name="Levitsky A.A."/>
            <person name="Li J.H."/>
            <person name="Li Z."/>
            <person name="Liang Y."/>
            <person name="Lin X."/>
            <person name="Liu X."/>
            <person name="Mattei B."/>
            <person name="McIntosh T.C."/>
            <person name="McLeod M.P."/>
            <person name="McPherson D."/>
            <person name="Merkulov G."/>
            <person name="Milshina N.V."/>
            <person name="Mobarry C."/>
            <person name="Morris J."/>
            <person name="Moshrefi A."/>
            <person name="Mount S.M."/>
            <person name="Moy M."/>
            <person name="Murphy B."/>
            <person name="Murphy L."/>
            <person name="Muzny D.M."/>
            <person name="Nelson D.L."/>
            <person name="Nelson D.R."/>
            <person name="Nelson K.A."/>
            <person name="Nixon K."/>
            <person name="Nusskern D.R."/>
            <person name="Pacleb J.M."/>
            <person name="Palazzolo M."/>
            <person name="Pittman G.S."/>
            <person name="Pan S."/>
            <person name="Pollard J."/>
            <person name="Puri V."/>
            <person name="Reese M.G."/>
            <person name="Reinert K."/>
            <person name="Remington K."/>
            <person name="Saunders R.D.C."/>
            <person name="Scheeler F."/>
            <person name="Shen H."/>
            <person name="Shue B.C."/>
            <person name="Siden-Kiamos I."/>
            <person name="Simpson M."/>
            <person name="Skupski M.P."/>
            <person name="Smith T.J."/>
            <person name="Spier E."/>
            <person name="Spradling A.C."/>
            <person name="Stapleton M."/>
            <person name="Strong R."/>
            <person name="Sun E."/>
            <person name="Svirskas R."/>
            <person name="Tector C."/>
            <person name="Turner R."/>
            <person name="Venter E."/>
            <person name="Wang A.H."/>
            <person name="Wang X."/>
            <person name="Wang Z.-Y."/>
            <person name="Wassarman D.A."/>
            <person name="Weinstock G.M."/>
            <person name="Weissenbach J."/>
            <person name="Williams S.M."/>
            <person name="Woodage T."/>
            <person name="Worley K.C."/>
            <person name="Wu D."/>
            <person name="Yang S."/>
            <person name="Yao Q.A."/>
            <person name="Ye J."/>
            <person name="Yeh R.-F."/>
            <person name="Zaveri J.S."/>
            <person name="Zhan M."/>
            <person name="Zhang G."/>
            <person name="Zhao Q."/>
            <person name="Zheng L."/>
            <person name="Zheng X.H."/>
            <person name="Zhong F.N."/>
            <person name="Zhong W."/>
            <person name="Zhou X."/>
            <person name="Zhu S.C."/>
            <person name="Zhu X."/>
            <person name="Smith H.O."/>
            <person name="Gibbs R.A."/>
            <person name="Myers E.W."/>
            <person name="Rubin G.M."/>
            <person name="Venter J.C."/>
        </authorList>
    </citation>
    <scope>NUCLEOTIDE SEQUENCE [LARGE SCALE GENOMIC DNA]</scope>
    <source>
        <strain>Berkeley</strain>
    </source>
</reference>
<reference key="2">
    <citation type="journal article" date="2002" name="Genome Biol.">
        <title>Annotation of the Drosophila melanogaster euchromatic genome: a systematic review.</title>
        <authorList>
            <person name="Misra S."/>
            <person name="Crosby M.A."/>
            <person name="Mungall C.J."/>
            <person name="Matthews B.B."/>
            <person name="Campbell K.S."/>
            <person name="Hradecky P."/>
            <person name="Huang Y."/>
            <person name="Kaminker J.S."/>
            <person name="Millburn G.H."/>
            <person name="Prochnik S.E."/>
            <person name="Smith C.D."/>
            <person name="Tupy J.L."/>
            <person name="Whitfield E.J."/>
            <person name="Bayraktaroglu L."/>
            <person name="Berman B.P."/>
            <person name="Bettencourt B.R."/>
            <person name="Celniker S.E."/>
            <person name="de Grey A.D.N.J."/>
            <person name="Drysdale R.A."/>
            <person name="Harris N.L."/>
            <person name="Richter J."/>
            <person name="Russo S."/>
            <person name="Schroeder A.J."/>
            <person name="Shu S.Q."/>
            <person name="Stapleton M."/>
            <person name="Yamada C."/>
            <person name="Ashburner M."/>
            <person name="Gelbart W.M."/>
            <person name="Rubin G.M."/>
            <person name="Lewis S.E."/>
        </authorList>
    </citation>
    <scope>GENOME REANNOTATION</scope>
    <source>
        <strain>Berkeley</strain>
    </source>
</reference>
<reference key="3">
    <citation type="submission" date="2007-12" db="EMBL/GenBank/DDBJ databases">
        <authorList>
            <person name="Stapleton M."/>
            <person name="Carlson J.W."/>
            <person name="Frise E."/>
            <person name="Kapadia B."/>
            <person name="Park S."/>
            <person name="Wan K.H."/>
            <person name="Yu C."/>
            <person name="Celniker S.E."/>
        </authorList>
    </citation>
    <scope>NUCLEOTIDE SEQUENCE [LARGE SCALE MRNA]</scope>
    <source>
        <strain>Berkeley</strain>
        <tissue>Ovary</tissue>
    </source>
</reference>
<proteinExistence type="evidence at transcript level"/>
<keyword id="KW-0256">Endoplasmic reticulum</keyword>
<keyword id="KW-0349">Heme</keyword>
<keyword id="KW-0408">Iron</keyword>
<keyword id="KW-0472">Membrane</keyword>
<keyword id="KW-0479">Metal-binding</keyword>
<keyword id="KW-0492">Microsome</keyword>
<keyword id="KW-0503">Monooxygenase</keyword>
<keyword id="KW-0560">Oxidoreductase</keyword>
<keyword id="KW-1185">Reference proteome</keyword>
<feature type="chain" id="PRO_0000051891" description="Probable cytochrome P450 6v1">
    <location>
        <begin position="1"/>
        <end position="520"/>
    </location>
</feature>
<feature type="binding site" description="axial binding residue" evidence="1">
    <location>
        <position position="465"/>
    </location>
    <ligand>
        <name>heme</name>
        <dbReference type="ChEBI" id="CHEBI:30413"/>
    </ligand>
    <ligandPart>
        <name>Fe</name>
        <dbReference type="ChEBI" id="CHEBI:18248"/>
    </ligandPart>
</feature>
<comment type="function">
    <text evidence="1">May be involved in the metabolism of insect hormones and in the breakdown of synthetic insecticides.</text>
</comment>
<comment type="cofactor">
    <cofactor evidence="1">
        <name>heme</name>
        <dbReference type="ChEBI" id="CHEBI:30413"/>
    </cofactor>
</comment>
<comment type="subcellular location">
    <subcellularLocation>
        <location evidence="2">Endoplasmic reticulum membrane</location>
        <topology evidence="2">Peripheral membrane protein</topology>
    </subcellularLocation>
    <subcellularLocation>
        <location evidence="2">Microsome membrane</location>
        <topology evidence="2">Peripheral membrane protein</topology>
    </subcellularLocation>
</comment>
<comment type="similarity">
    <text evidence="2">Belongs to the cytochrome P450 family.</text>
</comment>
<name>CP6V1_DROME</name>